<gene>
    <name type="primary">APOC1</name>
</gene>
<evidence type="ECO:0000250" key="1">
    <source>
        <dbReference type="UniProtKB" id="P86336"/>
    </source>
</evidence>
<evidence type="ECO:0000269" key="2">
    <source>
    </source>
</evidence>
<evidence type="ECO:0000269" key="3">
    <source>
    </source>
</evidence>
<evidence type="ECO:0000269" key="4">
    <source>
    </source>
</evidence>
<evidence type="ECO:0000269" key="5">
    <source>
    </source>
</evidence>
<evidence type="ECO:0000269" key="6">
    <source>
    </source>
</evidence>
<evidence type="ECO:0000269" key="7">
    <source>
    </source>
</evidence>
<evidence type="ECO:0000303" key="8">
    <source>
    </source>
</evidence>
<evidence type="ECO:0000303" key="9">
    <source>
    </source>
</evidence>
<evidence type="ECO:0000305" key="10"/>
<evidence type="ECO:0007829" key="11">
    <source>
        <dbReference type="PDB" id="1IOJ"/>
    </source>
</evidence>
<evidence type="ECO:0007829" key="12">
    <source>
        <dbReference type="PDB" id="6DVU"/>
    </source>
</evidence>
<accession>P02654</accession>
<accession>B2R526</accession>
<accession>Q6IB97</accession>
<comment type="function">
    <text evidence="5 8">Inhibitor of lipoprotein binding to the low density lipoprotein (LDL) receptor, LDL receptor-related protein, and very low density lipoprotein (VLDL) receptor. Associates with high density lipoproteins (HDL) and the triacylglycerol-rich lipoproteins in the plasma and makes up about 10% of the protein of the VLDL and 2% of that of HDL. Appears to interfere directly with fatty acid uptake and is also the major plasma inhibitor of cholesteryl ester transfer protein (CETP). Binds free fatty acids and reduces their intracellular esterification. Modulates the interaction of APOE with beta-migrating VLDL and inhibits binding of beta-VLDL to the LDL receptor-related protein.</text>
</comment>
<comment type="interaction">
    <interactant intactId="EBI-1220105">
        <id>P02654</id>
    </interactant>
    <interactant intactId="EBI-12562760">
        <id>Q13085-4</id>
        <label>ACACA</label>
    </interactant>
    <organismsDiffer>false</organismsDiffer>
    <experiments>3</experiments>
</comment>
<comment type="interaction">
    <interactant intactId="EBI-1220105">
        <id>P02654</id>
    </interactant>
    <interactant intactId="EBI-2876502">
        <id>Q96CM8</id>
        <label>ACSF2</label>
    </interactant>
    <organismsDiffer>false</organismsDiffer>
    <experiments>3</experiments>
</comment>
<comment type="interaction">
    <interactant intactId="EBI-1220105">
        <id>P02654</id>
    </interactant>
    <interactant intactId="EBI-17870477">
        <id>P56378-2</id>
        <label>ATP5MPL</label>
    </interactant>
    <organismsDiffer>false</organismsDiffer>
    <experiments>3</experiments>
</comment>
<comment type="interaction">
    <interactant intactId="EBI-1220105">
        <id>P02654</id>
    </interactant>
    <interactant intactId="EBI-707714">
        <id>Q92843</id>
        <label>BCL2L2</label>
    </interactant>
    <organismsDiffer>false</organismsDiffer>
    <experiments>3</experiments>
</comment>
<comment type="interaction">
    <interactant intactId="EBI-1220105">
        <id>P02654</id>
    </interactant>
    <interactant intactId="EBI-7062247">
        <id>Q9UHD4</id>
        <label>CIDEB</label>
    </interactant>
    <organismsDiffer>false</organismsDiffer>
    <experiments>3</experiments>
</comment>
<comment type="interaction">
    <interactant intactId="EBI-1220105">
        <id>P02654</id>
    </interactant>
    <interactant intactId="EBI-3923585">
        <id>Q8N5I4</id>
        <label>DHRSX</label>
    </interactant>
    <organismsDiffer>false</organismsDiffer>
    <experiments>3</experiments>
</comment>
<comment type="interaction">
    <interactant intactId="EBI-1220105">
        <id>P02654</id>
    </interactant>
    <interactant intactId="EBI-11961494">
        <id>Q6VB84</id>
        <label>FOXD4L3</label>
    </interactant>
    <organismsDiffer>false</organismsDiffer>
    <experiments>3</experiments>
</comment>
<comment type="interaction">
    <interactant intactId="EBI-1220105">
        <id>P02654</id>
    </interactant>
    <interactant intactId="EBI-11320924">
        <id>Q96QA5</id>
        <label>GSDMA</label>
    </interactant>
    <organismsDiffer>false</organismsDiffer>
    <experiments>3</experiments>
</comment>
<comment type="interaction">
    <interactant intactId="EBI-1220105">
        <id>P02654</id>
    </interactant>
    <interactant intactId="EBI-10294329">
        <id>Q99525</id>
        <label>H4C7</label>
    </interactant>
    <organismsDiffer>false</organismsDiffer>
    <experiments>3</experiments>
</comment>
<comment type="interaction">
    <interactant intactId="EBI-1220105">
        <id>P02654</id>
    </interactant>
    <interactant intactId="EBI-12809676">
        <id>A8MV81</id>
        <label>HIGD1C</label>
    </interactant>
    <organismsDiffer>false</organismsDiffer>
    <experiments>3</experiments>
</comment>
<comment type="interaction">
    <interactant intactId="EBI-1220105">
        <id>P02654</id>
    </interactant>
    <interactant intactId="EBI-1549822">
        <id>Q6P1Q0</id>
        <label>LETMD1</label>
    </interactant>
    <organismsDiffer>false</organismsDiffer>
    <experiments>3</experiments>
</comment>
<comment type="interaction">
    <interactant intactId="EBI-1220105">
        <id>P02654</id>
    </interactant>
    <interactant intactId="EBI-1042937">
        <id>Q8WWC4</id>
        <label>MAIP1</label>
    </interactant>
    <organismsDiffer>false</organismsDiffer>
    <experiments>3</experiments>
</comment>
<comment type="interaction">
    <interactant intactId="EBI-1220105">
        <id>P02654</id>
    </interactant>
    <interactant intactId="EBI-1053887">
        <id>Q5XKP0</id>
        <label>MICOS13</label>
    </interactant>
    <organismsDiffer>false</organismsDiffer>
    <experiments>3</experiments>
</comment>
<comment type="interaction">
    <interactant intactId="EBI-1220105">
        <id>P02654</id>
    </interactant>
    <interactant intactId="EBI-719403">
        <id>O95563</id>
        <label>MPC2</label>
    </interactant>
    <organismsDiffer>false</organismsDiffer>
    <experiments>3</experiments>
</comment>
<comment type="interaction">
    <interactant intactId="EBI-1220105">
        <id>P02654</id>
    </interactant>
    <interactant intactId="EBI-6164522">
        <id>Q9Y6C9</id>
        <label>MTCH2</label>
    </interactant>
    <organismsDiffer>false</organismsDiffer>
    <experiments>3</experiments>
</comment>
<comment type="interaction">
    <interactant intactId="EBI-1220105">
        <id>P02654</id>
    </interactant>
    <interactant intactId="EBI-7825321">
        <id>Q96E29</id>
        <label>MTERF3</label>
    </interactant>
    <organismsDiffer>false</organismsDiffer>
    <experiments>3</experiments>
</comment>
<comment type="interaction">
    <interactant intactId="EBI-1220105">
        <id>P02654</id>
    </interactant>
    <interactant intactId="EBI-725252">
        <id>Q9UMS0</id>
        <label>NFU1</label>
    </interactant>
    <organismsDiffer>false</organismsDiffer>
    <experiments>3</experiments>
</comment>
<comment type="interaction">
    <interactant intactId="EBI-1220105">
        <id>P02654</id>
    </interactant>
    <interactant intactId="EBI-744267">
        <id>Q96JH8</id>
        <label>RADIL</label>
    </interactant>
    <organismsDiffer>false</organismsDiffer>
    <experiments>3</experiments>
</comment>
<comment type="interaction">
    <interactant intactId="EBI-1220105">
        <id>P02654</id>
    </interactant>
    <interactant intactId="EBI-12736320">
        <id>Q8WXG1</id>
        <label>RSAD2</label>
    </interactant>
    <organismsDiffer>false</organismsDiffer>
    <experiments>3</experiments>
</comment>
<comment type="interaction">
    <interactant intactId="EBI-1220105">
        <id>P02654</id>
    </interactant>
    <interactant intactId="EBI-10217913">
        <id>Q14D33</id>
        <label>RTP5</label>
    </interactant>
    <organismsDiffer>false</organismsDiffer>
    <experiments>3</experiments>
</comment>
<comment type="interaction">
    <interactant intactId="EBI-1220105">
        <id>P02654</id>
    </interactant>
    <interactant intactId="EBI-10179231">
        <id>O00241-2</id>
        <label>SIRPB1</label>
    </interactant>
    <organismsDiffer>false</organismsDiffer>
    <experiments>3</experiments>
</comment>
<comment type="interaction">
    <interactant intactId="EBI-1220105">
        <id>P02654</id>
    </interactant>
    <interactant intactId="EBI-742688">
        <id>Q9NZD8</id>
        <label>SPG21</label>
    </interactant>
    <organismsDiffer>false</organismsDiffer>
    <experiments>3</experiments>
</comment>
<comment type="interaction">
    <interactant intactId="EBI-1220105">
        <id>P02654</id>
    </interactant>
    <interactant intactId="EBI-10238936">
        <id>Q17RD7</id>
        <label>SYT16</label>
    </interactant>
    <organismsDiffer>false</organismsDiffer>
    <experiments>3</experiments>
</comment>
<comment type="interaction">
    <interactant intactId="EBI-1220105">
        <id>P02654</id>
    </interactant>
    <interactant intactId="EBI-10278496">
        <id>Q53QW1</id>
        <label>TEX44</label>
    </interactant>
    <organismsDiffer>false</organismsDiffer>
    <experiments>5</experiments>
</comment>
<comment type="interaction">
    <interactant intactId="EBI-1220105">
        <id>P02654</id>
    </interactant>
    <interactant intactId="EBI-17249488">
        <id>Q6ZUI0</id>
        <label>TPRG1</label>
    </interactant>
    <organismsDiffer>false</organismsDiffer>
    <experiments>3</experiments>
</comment>
<comment type="subcellular location">
    <subcellularLocation>
        <location evidence="9">Secreted</location>
    </subcellularLocation>
</comment>
<comment type="tissue specificity">
    <text evidence="6">Synthesized mainly in liver and to a minor degree in intestine. Also found in the lung and spleen.</text>
</comment>
<comment type="miscellaneous">
    <text evidence="8">Apolipoprotein C-I is present in acidic (APOC1A) and basic (APOC1B) forms in P.paniscus, P.abelii and P.troglodytes and perhaps also in baboons and macaques. The two genes for ApoC-I arose through a duplication process that occurred after the divergence of New World monkeys from the human lineage. In human, the acidic form has become a pseudogene sometime between the divergence of bonobos and chimpanzees from the human lineage and the appearance of the Denisovans. Pseudogenization resulted when the codon for the penultimate amino acid in the signal sequence was changed to a stop codon.</text>
</comment>
<comment type="similarity">
    <text evidence="10">Belongs to the apolipoprotein C1 family.</text>
</comment>
<comment type="online information" name="Wikipedia">
    <link uri="https://en.wikipedia.org/wiki/Apolipoprotein_C1"/>
    <text>Apolipoprotein C1 entry</text>
</comment>
<keyword id="KW-0002">3D-structure</keyword>
<keyword id="KW-0903">Direct protein sequencing</keyword>
<keyword id="KW-0445">Lipid transport</keyword>
<keyword id="KW-1267">Proteomics identification</keyword>
<keyword id="KW-1185">Reference proteome</keyword>
<keyword id="KW-0964">Secreted</keyword>
<keyword id="KW-0732">Signal</keyword>
<keyword id="KW-0813">Transport</keyword>
<keyword id="KW-0850">VLDL</keyword>
<dbReference type="EMBL" id="X00570">
    <property type="protein sequence ID" value="CAA25235.1"/>
    <property type="molecule type" value="mRNA"/>
</dbReference>
<dbReference type="EMBL" id="M20843">
    <property type="protein sequence ID" value="AAA51763.1"/>
    <property type="molecule type" value="Genomic_DNA"/>
</dbReference>
<dbReference type="EMBL" id="AF050154">
    <property type="protein sequence ID" value="AAD02506.1"/>
    <property type="molecule type" value="Genomic_DNA"/>
</dbReference>
<dbReference type="EMBL" id="AY422954">
    <property type="protein sequence ID" value="AAQ91813.1"/>
    <property type="molecule type" value="Genomic_DNA"/>
</dbReference>
<dbReference type="EMBL" id="BT007142">
    <property type="protein sequence ID" value="AAP35806.1"/>
    <property type="molecule type" value="mRNA"/>
</dbReference>
<dbReference type="EMBL" id="AK312036">
    <property type="protein sequence ID" value="BAG34973.1"/>
    <property type="molecule type" value="mRNA"/>
</dbReference>
<dbReference type="EMBL" id="CR456907">
    <property type="protein sequence ID" value="CAG33188.1"/>
    <property type="molecule type" value="mRNA"/>
</dbReference>
<dbReference type="EMBL" id="AM392727">
    <property type="protein sequence ID" value="CAL37605.1"/>
    <property type="molecule type" value="mRNA"/>
</dbReference>
<dbReference type="EMBL" id="FJ525874">
    <property type="protein sequence ID" value="ACN81312.1"/>
    <property type="molecule type" value="Genomic_DNA"/>
</dbReference>
<dbReference type="EMBL" id="CH471126">
    <property type="protein sequence ID" value="EAW57307.1"/>
    <property type="molecule type" value="Genomic_DNA"/>
</dbReference>
<dbReference type="EMBL" id="BC009698">
    <property type="protein sequence ID" value="AAH09698.1"/>
    <property type="molecule type" value="mRNA"/>
</dbReference>
<dbReference type="EMBL" id="BC055093">
    <property type="protein sequence ID" value="AAH55093.1"/>
    <property type="molecule type" value="mRNA"/>
</dbReference>
<dbReference type="EMBL" id="M20902">
    <property type="protein sequence ID" value="AAA88018.1"/>
    <property type="molecule type" value="Genomic_DNA"/>
</dbReference>
<dbReference type="EMBL" id="M27359">
    <property type="protein sequence ID" value="AAA51762.1"/>
    <property type="molecule type" value="mRNA"/>
</dbReference>
<dbReference type="CCDS" id="CCDS12648.1"/>
<dbReference type="PIR" id="A28057">
    <property type="entry name" value="LPHUC1"/>
</dbReference>
<dbReference type="RefSeq" id="NP_001307994.1">
    <property type="nucleotide sequence ID" value="NM_001321065.2"/>
</dbReference>
<dbReference type="RefSeq" id="NP_001307995.1">
    <property type="nucleotide sequence ID" value="NM_001321066.2"/>
</dbReference>
<dbReference type="RefSeq" id="NP_001636.1">
    <property type="nucleotide sequence ID" value="NM_001645.5"/>
</dbReference>
<dbReference type="PDB" id="1ALE">
    <property type="method" value="NMR"/>
    <property type="chains" value="A=33-50"/>
</dbReference>
<dbReference type="PDB" id="1ALF">
    <property type="method" value="NMR"/>
    <property type="chains" value="A=61-79"/>
</dbReference>
<dbReference type="PDB" id="1IOJ">
    <property type="method" value="NMR"/>
    <property type="chains" value="A=27-83"/>
</dbReference>
<dbReference type="PDB" id="1OPP">
    <property type="method" value="NMR"/>
    <property type="chains" value="A=27-64"/>
</dbReference>
<dbReference type="PDB" id="6DVU">
    <property type="method" value="X-ray"/>
    <property type="resolution" value="1.80 A"/>
    <property type="chains" value="A/B=1-83"/>
</dbReference>
<dbReference type="PDB" id="6DXR">
    <property type="method" value="X-ray"/>
    <property type="resolution" value="2.00 A"/>
    <property type="chains" value="A/B=1-83"/>
</dbReference>
<dbReference type="PDB" id="6DZ6">
    <property type="method" value="X-ray"/>
    <property type="resolution" value="3.00 A"/>
    <property type="chains" value="A/B=1-83"/>
</dbReference>
<dbReference type="PDB" id="6NF3">
    <property type="method" value="X-ray"/>
    <property type="resolution" value="2.33 A"/>
    <property type="chains" value="A/B=1-83"/>
</dbReference>
<dbReference type="PDBsum" id="1ALE"/>
<dbReference type="PDBsum" id="1ALF"/>
<dbReference type="PDBsum" id="1IOJ"/>
<dbReference type="PDBsum" id="1OPP"/>
<dbReference type="PDBsum" id="6DVU"/>
<dbReference type="PDBsum" id="6DXR"/>
<dbReference type="PDBsum" id="6DZ6"/>
<dbReference type="PDBsum" id="6NF3"/>
<dbReference type="SMR" id="P02654"/>
<dbReference type="BioGRID" id="106838">
    <property type="interactions" value="36"/>
</dbReference>
<dbReference type="FunCoup" id="P02654">
    <property type="interactions" value="8"/>
</dbReference>
<dbReference type="IntAct" id="P02654">
    <property type="interactions" value="31"/>
</dbReference>
<dbReference type="MINT" id="P02654"/>
<dbReference type="STRING" id="9606.ENSP00000465356"/>
<dbReference type="CarbonylDB" id="P02654"/>
<dbReference type="PhosphoSitePlus" id="P02654"/>
<dbReference type="BioMuta" id="APOC1"/>
<dbReference type="DMDM" id="114016"/>
<dbReference type="CPTAC" id="non-CPTAC-1085"/>
<dbReference type="CPTAC" id="non-CPTAC-2623"/>
<dbReference type="jPOST" id="P02654"/>
<dbReference type="MassIVE" id="P02654"/>
<dbReference type="PaxDb" id="9606-ENSP00000465356"/>
<dbReference type="PeptideAtlas" id="P02654"/>
<dbReference type="ProteomicsDB" id="51539"/>
<dbReference type="Pumba" id="P02654"/>
<dbReference type="TopDownProteomics" id="P02654"/>
<dbReference type="Antibodypedia" id="17780">
    <property type="antibodies" value="374 antibodies from 34 providers"/>
</dbReference>
<dbReference type="DNASU" id="341"/>
<dbReference type="Ensembl" id="ENST00000588750.5">
    <property type="protein sequence ID" value="ENSP00000465356.1"/>
    <property type="gene ID" value="ENSG00000130208.10"/>
</dbReference>
<dbReference type="Ensembl" id="ENST00000588802.5">
    <property type="protein sequence ID" value="ENSP00000468029.1"/>
    <property type="gene ID" value="ENSG00000130208.10"/>
</dbReference>
<dbReference type="Ensembl" id="ENST00000592535.6">
    <property type="protein sequence ID" value="ENSP00000468276.2"/>
    <property type="gene ID" value="ENSG00000130208.10"/>
</dbReference>
<dbReference type="GeneID" id="341"/>
<dbReference type="KEGG" id="hsa:341"/>
<dbReference type="MANE-Select" id="ENST00000592535.6">
    <property type="protein sequence ID" value="ENSP00000468276.2"/>
    <property type="RefSeq nucleotide sequence ID" value="NM_001645.5"/>
    <property type="RefSeq protein sequence ID" value="NP_001636.1"/>
</dbReference>
<dbReference type="UCSC" id="uc002pac.2">
    <property type="organism name" value="human"/>
</dbReference>
<dbReference type="AGR" id="HGNC:607"/>
<dbReference type="CTD" id="341"/>
<dbReference type="DisGeNET" id="341"/>
<dbReference type="GeneCards" id="APOC1"/>
<dbReference type="HGNC" id="HGNC:607">
    <property type="gene designation" value="APOC1"/>
</dbReference>
<dbReference type="HPA" id="ENSG00000130208">
    <property type="expression patterns" value="Tissue enriched (liver)"/>
</dbReference>
<dbReference type="MIM" id="107710">
    <property type="type" value="gene"/>
</dbReference>
<dbReference type="neXtProt" id="NX_P02654"/>
<dbReference type="OpenTargets" id="ENSG00000130208"/>
<dbReference type="PharmGKB" id="PA51"/>
<dbReference type="VEuPathDB" id="HostDB:ENSG00000130208"/>
<dbReference type="eggNOG" id="ENOG502SEU4">
    <property type="taxonomic scope" value="Eukaryota"/>
</dbReference>
<dbReference type="GeneTree" id="ENSGT00390000011584"/>
<dbReference type="InParanoid" id="P02654"/>
<dbReference type="OMA" id="GTSTRNW"/>
<dbReference type="OrthoDB" id="8941712at2759"/>
<dbReference type="PAN-GO" id="P02654">
    <property type="GO annotations" value="10 GO annotations based on evolutionary models"/>
</dbReference>
<dbReference type="PhylomeDB" id="P02654"/>
<dbReference type="PathwayCommons" id="P02654"/>
<dbReference type="Reactome" id="R-HSA-8866423">
    <property type="pathway name" value="VLDL assembly"/>
</dbReference>
<dbReference type="Reactome" id="R-HSA-8964046">
    <property type="pathway name" value="VLDL clearance"/>
</dbReference>
<dbReference type="Reactome" id="R-HSA-9029569">
    <property type="pathway name" value="NR1H3 &amp; NR1H2 regulate gene expression linked to cholesterol transport and efflux"/>
</dbReference>
<dbReference type="SignaLink" id="P02654"/>
<dbReference type="BioGRID-ORCS" id="341">
    <property type="hits" value="24 hits in 1148 CRISPR screens"/>
</dbReference>
<dbReference type="ChiTaRS" id="APOC1">
    <property type="organism name" value="human"/>
</dbReference>
<dbReference type="EvolutionaryTrace" id="P02654"/>
<dbReference type="GeneWiki" id="Apolipoprotein_C1"/>
<dbReference type="GenomeRNAi" id="341"/>
<dbReference type="Pharos" id="P02654">
    <property type="development level" value="Tbio"/>
</dbReference>
<dbReference type="PRO" id="PR:P02654"/>
<dbReference type="Proteomes" id="UP000005640">
    <property type="component" value="Chromosome 19"/>
</dbReference>
<dbReference type="RNAct" id="P02654">
    <property type="molecule type" value="protein"/>
</dbReference>
<dbReference type="Bgee" id="ENSG00000130208">
    <property type="expression patterns" value="Expressed in right lobe of liver and 181 other cell types or tissues"/>
</dbReference>
<dbReference type="ExpressionAtlas" id="P02654">
    <property type="expression patterns" value="baseline and differential"/>
</dbReference>
<dbReference type="GO" id="GO:0042627">
    <property type="term" value="C:chylomicron"/>
    <property type="evidence" value="ECO:0000304"/>
    <property type="project" value="BHF-UCL"/>
</dbReference>
<dbReference type="GO" id="GO:0005783">
    <property type="term" value="C:endoplasmic reticulum"/>
    <property type="evidence" value="ECO:0000314"/>
    <property type="project" value="LIFEdb"/>
</dbReference>
<dbReference type="GO" id="GO:0005576">
    <property type="term" value="C:extracellular region"/>
    <property type="evidence" value="ECO:0000304"/>
    <property type="project" value="Reactome"/>
</dbReference>
<dbReference type="GO" id="GO:0034364">
    <property type="term" value="C:high-density lipoprotein particle"/>
    <property type="evidence" value="ECO:0000314"/>
    <property type="project" value="BHF-UCL"/>
</dbReference>
<dbReference type="GO" id="GO:0034361">
    <property type="term" value="C:very-low-density lipoprotein particle"/>
    <property type="evidence" value="ECO:0000314"/>
    <property type="project" value="BHF-UCL"/>
</dbReference>
<dbReference type="GO" id="GO:0005504">
    <property type="term" value="F:fatty acid binding"/>
    <property type="evidence" value="ECO:0000314"/>
    <property type="project" value="BHF-UCL"/>
</dbReference>
<dbReference type="GO" id="GO:0055102">
    <property type="term" value="F:lipase inhibitor activity"/>
    <property type="evidence" value="ECO:0000314"/>
    <property type="project" value="BHF-UCL"/>
</dbReference>
<dbReference type="GO" id="GO:0031210">
    <property type="term" value="F:phosphatidylcholine binding"/>
    <property type="evidence" value="ECO:0000304"/>
    <property type="project" value="BHF-UCL"/>
</dbReference>
<dbReference type="GO" id="GO:0060228">
    <property type="term" value="F:phosphatidylcholine-sterol O-acyltransferase activator activity"/>
    <property type="evidence" value="ECO:0000304"/>
    <property type="project" value="BHF-UCL"/>
</dbReference>
<dbReference type="GO" id="GO:0004859">
    <property type="term" value="F:phospholipase inhibitor activity"/>
    <property type="evidence" value="ECO:0000314"/>
    <property type="project" value="BHF-UCL"/>
</dbReference>
<dbReference type="GO" id="GO:0033344">
    <property type="term" value="P:cholesterol efflux"/>
    <property type="evidence" value="ECO:0000314"/>
    <property type="project" value="BHF-UCL"/>
</dbReference>
<dbReference type="GO" id="GO:0008203">
    <property type="term" value="P:cholesterol metabolic process"/>
    <property type="evidence" value="ECO:0007669"/>
    <property type="project" value="Ensembl"/>
</dbReference>
<dbReference type="GO" id="GO:0034382">
    <property type="term" value="P:chylomicron remnant clearance"/>
    <property type="evidence" value="ECO:0000314"/>
    <property type="project" value="BHF-UCL"/>
</dbReference>
<dbReference type="GO" id="GO:0034375">
    <property type="term" value="P:high-density lipoprotein particle remodeling"/>
    <property type="evidence" value="ECO:0000304"/>
    <property type="project" value="BHF-UCL"/>
</dbReference>
<dbReference type="GO" id="GO:0006629">
    <property type="term" value="P:lipid metabolic process"/>
    <property type="evidence" value="ECO:0000304"/>
    <property type="project" value="ProtInc"/>
</dbReference>
<dbReference type="GO" id="GO:0042157">
    <property type="term" value="P:lipoprotein metabolic process"/>
    <property type="evidence" value="ECO:0007669"/>
    <property type="project" value="InterPro"/>
</dbReference>
<dbReference type="GO" id="GO:0032375">
    <property type="term" value="P:negative regulation of cholesterol transport"/>
    <property type="evidence" value="ECO:0000314"/>
    <property type="project" value="BHF-UCL"/>
</dbReference>
<dbReference type="GO" id="GO:0045717">
    <property type="term" value="P:negative regulation of fatty acid biosynthetic process"/>
    <property type="evidence" value="ECO:0000314"/>
    <property type="project" value="BHF-UCL"/>
</dbReference>
<dbReference type="GO" id="GO:0050995">
    <property type="term" value="P:negative regulation of lipid catabolic process"/>
    <property type="evidence" value="ECO:0000314"/>
    <property type="project" value="BHF-UCL"/>
</dbReference>
<dbReference type="GO" id="GO:0045833">
    <property type="term" value="P:negative regulation of lipid metabolic process"/>
    <property type="evidence" value="ECO:0000314"/>
    <property type="project" value="BHF-UCL"/>
</dbReference>
<dbReference type="GO" id="GO:0010900">
    <property type="term" value="P:negative regulation of phosphatidylcholine catabolic process"/>
    <property type="evidence" value="ECO:0000314"/>
    <property type="project" value="BHF-UCL"/>
</dbReference>
<dbReference type="GO" id="GO:0048261">
    <property type="term" value="P:negative regulation of receptor-mediated endocytosis"/>
    <property type="evidence" value="ECO:0000314"/>
    <property type="project" value="BHF-UCL"/>
</dbReference>
<dbReference type="GO" id="GO:0010897">
    <property type="term" value="P:negative regulation of triglyceride catabolic process"/>
    <property type="evidence" value="ECO:0000314"/>
    <property type="project" value="ARUK-UCL"/>
</dbReference>
<dbReference type="GO" id="GO:0010916">
    <property type="term" value="P:negative regulation of very-low-density lipoprotein particle clearance"/>
    <property type="evidence" value="ECO:0000314"/>
    <property type="project" value="BHF-UCL"/>
</dbReference>
<dbReference type="GO" id="GO:0033700">
    <property type="term" value="P:phospholipid efflux"/>
    <property type="evidence" value="ECO:0000314"/>
    <property type="project" value="BHF-UCL"/>
</dbReference>
<dbReference type="GO" id="GO:0034369">
    <property type="term" value="P:plasma lipoprotein particle remodeling"/>
    <property type="evidence" value="ECO:0000314"/>
    <property type="project" value="BHF-UCL"/>
</dbReference>
<dbReference type="GO" id="GO:0032374">
    <property type="term" value="P:regulation of cholesterol transport"/>
    <property type="evidence" value="ECO:0000314"/>
    <property type="project" value="BHF-UCL"/>
</dbReference>
<dbReference type="GO" id="GO:0070328">
    <property type="term" value="P:triglyceride homeostasis"/>
    <property type="evidence" value="ECO:0000314"/>
    <property type="project" value="BHF-UCL"/>
</dbReference>
<dbReference type="GO" id="GO:0006641">
    <property type="term" value="P:triglyceride metabolic process"/>
    <property type="evidence" value="ECO:0000318"/>
    <property type="project" value="GO_Central"/>
</dbReference>
<dbReference type="GO" id="GO:0034379">
    <property type="term" value="P:very-low-density lipoprotein particle assembly"/>
    <property type="evidence" value="ECO:0000304"/>
    <property type="project" value="BHF-UCL"/>
</dbReference>
<dbReference type="GO" id="GO:0034447">
    <property type="term" value="P:very-low-density lipoprotein particle clearance"/>
    <property type="evidence" value="ECO:0000314"/>
    <property type="project" value="BHF-UCL"/>
</dbReference>
<dbReference type="FunFam" id="4.10.260.30:FF:000001">
    <property type="entry name" value="Apolipoprotein C-I"/>
    <property type="match status" value="1"/>
</dbReference>
<dbReference type="Gene3D" id="4.10.260.30">
    <property type="entry name" value="Apolipoprotein C-I"/>
    <property type="match status" value="1"/>
</dbReference>
<dbReference type="InterPro" id="IPR043081">
    <property type="entry name" value="ApoC-1_sf"/>
</dbReference>
<dbReference type="InterPro" id="IPR006781">
    <property type="entry name" value="ApoC-I"/>
</dbReference>
<dbReference type="PANTHER" id="PTHR16565">
    <property type="entry name" value="APOLIPOPROTEIN C-I"/>
    <property type="match status" value="1"/>
</dbReference>
<dbReference type="PANTHER" id="PTHR16565:SF2">
    <property type="entry name" value="APOLIPOPROTEIN C-I"/>
    <property type="match status" value="1"/>
</dbReference>
<dbReference type="Pfam" id="PF04691">
    <property type="entry name" value="ApoC-I"/>
    <property type="match status" value="1"/>
</dbReference>
<name>APOC1_HUMAN</name>
<feature type="signal peptide" evidence="3 7">
    <location>
        <begin position="1"/>
        <end position="26"/>
    </location>
</feature>
<feature type="chain" id="PRO_0000002014" description="Apolipoprotein C-I">
    <location>
        <begin position="27"/>
        <end position="83"/>
    </location>
</feature>
<feature type="chain" id="PRO_0000391843" description="Truncated apolipoprotein C-I" evidence="1">
    <location>
        <begin position="29"/>
        <end position="83"/>
    </location>
</feature>
<feature type="sequence variant" id="VAR_014183" description="In dbSNP:rs5112." evidence="2">
    <original>I</original>
    <variation>M</variation>
    <location>
        <position position="16"/>
    </location>
</feature>
<feature type="sequence variant" id="VAR_029011" description="More susceptible to N-terminal truncation and shows greater distribution to the VLDL than the protein with T-71; dbSNP:rs142372275." evidence="4">
    <original>T</original>
    <variation>S</variation>
    <location>
        <position position="71"/>
    </location>
</feature>
<feature type="helix" evidence="12">
    <location>
        <begin position="32"/>
        <end position="78"/>
    </location>
</feature>
<feature type="strand" evidence="11">
    <location>
        <begin position="79"/>
        <end position="81"/>
    </location>
</feature>
<sequence>MRLFLSLPVLVVVLSIVLEGPAPAQGTPDVSSALDKLKEFGNTLEDKARELISRIKQSELSAKMREWFSETFQKVKEKLKIDS</sequence>
<reference key="1">
    <citation type="journal article" date="1984" name="Nucleic Acids Res.">
        <title>Characterisation of mRNAs encoding the precursor for human apolipoprotein CI.</title>
        <authorList>
            <person name="Knott T.J."/>
            <person name="Robertson M.E."/>
            <person name="Priestley L.M."/>
            <person name="Urdea M."/>
            <person name="Wallis S.C."/>
            <person name="Scott J."/>
        </authorList>
    </citation>
    <scope>NUCLEOTIDE SEQUENCE [MRNA]</scope>
</reference>
<reference key="2">
    <citation type="journal article" date="1988" name="J. Biol. Chem.">
        <title>Two copies of the human apolipoprotein C-I gene are linked closely to the apolipoprotein E gene.</title>
        <authorList>
            <person name="Lauer S.J."/>
            <person name="Walker D."/>
            <person name="Elshourbagy N.A."/>
            <person name="Reardon C.A."/>
            <person name="Levy-Wilson B."/>
            <person name="Taylor J.M."/>
        </authorList>
    </citation>
    <scope>NUCLEOTIDE SEQUENCE [GENOMIC DNA]</scope>
    <scope>SUBCELLULAR LOCATION</scope>
    <scope>TISSUE SPECIFICITY</scope>
</reference>
<reference key="3">
    <citation type="journal article" date="1998" name="DNA Seq.">
        <title>Sequencing of 42kb of the APO E-C2 gene cluster reveals a new gene: PEREC1.</title>
        <authorList>
            <person name="Freitas E.M."/>
            <person name="Zhang W.J."/>
            <person name="Lalonde J.P."/>
            <person name="Tay G.K."/>
            <person name="Gaudieri S."/>
            <person name="Ashworth L.K."/>
            <person name="Van Bockxmeer F.M."/>
            <person name="Dawkins R.L."/>
        </authorList>
    </citation>
    <scope>NUCLEOTIDE SEQUENCE [GENOMIC DNA]</scope>
</reference>
<reference key="4">
    <citation type="submission" date="2003-09" db="EMBL/GenBank/DDBJ databases">
        <authorList>
            <person name="Nickerson D.A."/>
            <person name="Smith J.D."/>
            <person name="Fullerton S.M."/>
            <person name="Clark A.G."/>
            <person name="Stengard J.H."/>
            <person name="Salomaa V."/>
            <person name="Boerwinkle E."/>
            <person name="Sing C.F."/>
            <person name="Weiss K.M."/>
        </authorList>
    </citation>
    <scope>NUCLEOTIDE SEQUENCE [GENOMIC DNA]</scope>
</reference>
<reference key="5">
    <citation type="submission" date="2003-05" db="EMBL/GenBank/DDBJ databases">
        <title>Cloning of human full-length CDSs in BD Creator(TM) system donor vector.</title>
        <authorList>
            <person name="Kalnine N."/>
            <person name="Chen X."/>
            <person name="Rolfs A."/>
            <person name="Halleck A."/>
            <person name="Hines L."/>
            <person name="Eisenstein S."/>
            <person name="Koundinya M."/>
            <person name="Raphael J."/>
            <person name="Moreira D."/>
            <person name="Kelley T."/>
            <person name="LaBaer J."/>
            <person name="Lin Y."/>
            <person name="Phelan M."/>
            <person name="Farmer A."/>
        </authorList>
    </citation>
    <scope>NUCLEOTIDE SEQUENCE [LARGE SCALE MRNA]</scope>
</reference>
<reference key="6">
    <citation type="journal article" date="2004" name="Nat. Genet.">
        <title>Complete sequencing and characterization of 21,243 full-length human cDNAs.</title>
        <authorList>
            <person name="Ota T."/>
            <person name="Suzuki Y."/>
            <person name="Nishikawa T."/>
            <person name="Otsuki T."/>
            <person name="Sugiyama T."/>
            <person name="Irie R."/>
            <person name="Wakamatsu A."/>
            <person name="Hayashi K."/>
            <person name="Sato H."/>
            <person name="Nagai K."/>
            <person name="Kimura K."/>
            <person name="Makita H."/>
            <person name="Sekine M."/>
            <person name="Obayashi M."/>
            <person name="Nishi T."/>
            <person name="Shibahara T."/>
            <person name="Tanaka T."/>
            <person name="Ishii S."/>
            <person name="Yamamoto J."/>
            <person name="Saito K."/>
            <person name="Kawai Y."/>
            <person name="Isono Y."/>
            <person name="Nakamura Y."/>
            <person name="Nagahari K."/>
            <person name="Murakami K."/>
            <person name="Yasuda T."/>
            <person name="Iwayanagi T."/>
            <person name="Wagatsuma M."/>
            <person name="Shiratori A."/>
            <person name="Sudo H."/>
            <person name="Hosoiri T."/>
            <person name="Kaku Y."/>
            <person name="Kodaira H."/>
            <person name="Kondo H."/>
            <person name="Sugawara M."/>
            <person name="Takahashi M."/>
            <person name="Kanda K."/>
            <person name="Yokoi T."/>
            <person name="Furuya T."/>
            <person name="Kikkawa E."/>
            <person name="Omura Y."/>
            <person name="Abe K."/>
            <person name="Kamihara K."/>
            <person name="Katsuta N."/>
            <person name="Sato K."/>
            <person name="Tanikawa M."/>
            <person name="Yamazaki M."/>
            <person name="Ninomiya K."/>
            <person name="Ishibashi T."/>
            <person name="Yamashita H."/>
            <person name="Murakawa K."/>
            <person name="Fujimori K."/>
            <person name="Tanai H."/>
            <person name="Kimata M."/>
            <person name="Watanabe M."/>
            <person name="Hiraoka S."/>
            <person name="Chiba Y."/>
            <person name="Ishida S."/>
            <person name="Ono Y."/>
            <person name="Takiguchi S."/>
            <person name="Watanabe S."/>
            <person name="Yosida M."/>
            <person name="Hotuta T."/>
            <person name="Kusano J."/>
            <person name="Kanehori K."/>
            <person name="Takahashi-Fujii A."/>
            <person name="Hara H."/>
            <person name="Tanase T.-O."/>
            <person name="Nomura Y."/>
            <person name="Togiya S."/>
            <person name="Komai F."/>
            <person name="Hara R."/>
            <person name="Takeuchi K."/>
            <person name="Arita M."/>
            <person name="Imose N."/>
            <person name="Musashino K."/>
            <person name="Yuuki H."/>
            <person name="Oshima A."/>
            <person name="Sasaki N."/>
            <person name="Aotsuka S."/>
            <person name="Yoshikawa Y."/>
            <person name="Matsunawa H."/>
            <person name="Ichihara T."/>
            <person name="Shiohata N."/>
            <person name="Sano S."/>
            <person name="Moriya S."/>
            <person name="Momiyama H."/>
            <person name="Satoh N."/>
            <person name="Takami S."/>
            <person name="Terashima Y."/>
            <person name="Suzuki O."/>
            <person name="Nakagawa S."/>
            <person name="Senoh A."/>
            <person name="Mizoguchi H."/>
            <person name="Goto Y."/>
            <person name="Shimizu F."/>
            <person name="Wakebe H."/>
            <person name="Hishigaki H."/>
            <person name="Watanabe T."/>
            <person name="Sugiyama A."/>
            <person name="Takemoto M."/>
            <person name="Kawakami B."/>
            <person name="Yamazaki M."/>
            <person name="Watanabe K."/>
            <person name="Kumagai A."/>
            <person name="Itakura S."/>
            <person name="Fukuzumi Y."/>
            <person name="Fujimori Y."/>
            <person name="Komiyama M."/>
            <person name="Tashiro H."/>
            <person name="Tanigami A."/>
            <person name="Fujiwara T."/>
            <person name="Ono T."/>
            <person name="Yamada K."/>
            <person name="Fujii Y."/>
            <person name="Ozaki K."/>
            <person name="Hirao M."/>
            <person name="Ohmori Y."/>
            <person name="Kawabata A."/>
            <person name="Hikiji T."/>
            <person name="Kobatake N."/>
            <person name="Inagaki H."/>
            <person name="Ikema Y."/>
            <person name="Okamoto S."/>
            <person name="Okitani R."/>
            <person name="Kawakami T."/>
            <person name="Noguchi S."/>
            <person name="Itoh T."/>
            <person name="Shigeta K."/>
            <person name="Senba T."/>
            <person name="Matsumura K."/>
            <person name="Nakajima Y."/>
            <person name="Mizuno T."/>
            <person name="Morinaga M."/>
            <person name="Sasaki M."/>
            <person name="Togashi T."/>
            <person name="Oyama M."/>
            <person name="Hata H."/>
            <person name="Watanabe M."/>
            <person name="Komatsu T."/>
            <person name="Mizushima-Sugano J."/>
            <person name="Satoh T."/>
            <person name="Shirai Y."/>
            <person name="Takahashi Y."/>
            <person name="Nakagawa K."/>
            <person name="Okumura K."/>
            <person name="Nagase T."/>
            <person name="Nomura N."/>
            <person name="Kikuchi H."/>
            <person name="Masuho Y."/>
            <person name="Yamashita R."/>
            <person name="Nakai K."/>
            <person name="Yada T."/>
            <person name="Nakamura Y."/>
            <person name="Ohara O."/>
            <person name="Isogai T."/>
            <person name="Sugano S."/>
        </authorList>
    </citation>
    <scope>NUCLEOTIDE SEQUENCE [LARGE SCALE MRNA]</scope>
    <source>
        <tissue>Liver</tissue>
    </source>
</reference>
<reference key="7">
    <citation type="submission" date="2004-06" db="EMBL/GenBank/DDBJ databases">
        <title>Cloning of human full open reading frames in Gateway(TM) system entry vector (pDONR201).</title>
        <authorList>
            <person name="Ebert L."/>
            <person name="Schick M."/>
            <person name="Neubert P."/>
            <person name="Schatten R."/>
            <person name="Henze S."/>
            <person name="Korn B."/>
        </authorList>
    </citation>
    <scope>NUCLEOTIDE SEQUENCE [LARGE SCALE MRNA]</scope>
</reference>
<reference key="8">
    <citation type="submission" date="2006-07" db="EMBL/GenBank/DDBJ databases">
        <authorList>
            <person name="Bechtel S."/>
            <person name="Schupp I."/>
            <person name="Duda A."/>
            <person name="Wellenreuther R."/>
            <person name="Mehrle A."/>
            <person name="Ruschke V."/>
            <person name="Poustka A."/>
            <person name="Wiemann S."/>
        </authorList>
    </citation>
    <scope>NUCLEOTIDE SEQUENCE [LARGE SCALE MRNA]</scope>
</reference>
<reference key="9">
    <citation type="submission" date="2008-12" db="EMBL/GenBank/DDBJ databases">
        <authorList>
            <consortium name="NHLBI resequencing and genotyping service (RS&amp;G)"/>
        </authorList>
    </citation>
    <scope>NUCLEOTIDE SEQUENCE [GENOMIC DNA]</scope>
</reference>
<reference key="10">
    <citation type="submission" date="2005-07" db="EMBL/GenBank/DDBJ databases">
        <authorList>
            <person name="Mural R.J."/>
            <person name="Istrail S."/>
            <person name="Sutton G."/>
            <person name="Florea L."/>
            <person name="Halpern A.L."/>
            <person name="Mobarry C.M."/>
            <person name="Lippert R."/>
            <person name="Walenz B."/>
            <person name="Shatkay H."/>
            <person name="Dew I."/>
            <person name="Miller J.R."/>
            <person name="Flanigan M.J."/>
            <person name="Edwards N.J."/>
            <person name="Bolanos R."/>
            <person name="Fasulo D."/>
            <person name="Halldorsson B.V."/>
            <person name="Hannenhalli S."/>
            <person name="Turner R."/>
            <person name="Yooseph S."/>
            <person name="Lu F."/>
            <person name="Nusskern D.R."/>
            <person name="Shue B.C."/>
            <person name="Zheng X.H."/>
            <person name="Zhong F."/>
            <person name="Delcher A.L."/>
            <person name="Huson D.H."/>
            <person name="Kravitz S.A."/>
            <person name="Mouchard L."/>
            <person name="Reinert K."/>
            <person name="Remington K.A."/>
            <person name="Clark A.G."/>
            <person name="Waterman M.S."/>
            <person name="Eichler E.E."/>
            <person name="Adams M.D."/>
            <person name="Hunkapiller M.W."/>
            <person name="Myers E.W."/>
            <person name="Venter J.C."/>
        </authorList>
    </citation>
    <scope>NUCLEOTIDE SEQUENCE [LARGE SCALE GENOMIC DNA]</scope>
</reference>
<reference key="11">
    <citation type="journal article" date="2004" name="Genome Res.">
        <title>The status, quality, and expansion of the NIH full-length cDNA project: the Mammalian Gene Collection (MGC).</title>
        <authorList>
            <consortium name="The MGC Project Team"/>
        </authorList>
    </citation>
    <scope>NUCLEOTIDE SEQUENCE [LARGE SCALE MRNA]</scope>
    <source>
        <tissue>Lung</tissue>
    </source>
</reference>
<reference key="12">
    <citation type="journal article" date="1985" name="Hum. Genet.">
        <title>Isolation and characterisation of a cDNA clone for human apolipoprotein CI and assignment of the gene to chromosome 19.</title>
        <authorList>
            <person name="Tata F."/>
            <person name="Henry I."/>
            <person name="Markham A.F."/>
            <person name="Wallis S.C."/>
            <person name="Weil D."/>
            <person name="Grzeschik K.H."/>
            <person name="Junien C."/>
            <person name="Williamson R."/>
            <person name="Humphries S.E."/>
        </authorList>
    </citation>
    <scope>NUCLEOTIDE SEQUENCE [MRNA] OF 15-83</scope>
</reference>
<reference key="13">
    <citation type="journal article" date="1975" name="J. Biol. Chem.">
        <title>The complete amino acid sequence of C-I (apoLp-Ser), an apolipoprotein from human very low density lipoproteins.</title>
        <authorList>
            <person name="Shulman R.S."/>
            <person name="Herbert P.N."/>
            <person name="Wehrly K."/>
            <person name="Fredrickson D.S."/>
        </authorList>
    </citation>
    <scope>PROTEIN SEQUENCE OF 27-83</scope>
</reference>
<reference key="14">
    <citation type="journal article" date="1974" name="J. Biol. Chem.">
        <title>The primary structure of apolipoprotein-serine.</title>
        <authorList>
            <person name="Jackson R.L."/>
            <person name="Sparrow J.T."/>
            <person name="Baker H.N."/>
            <person name="Morrisett J.D."/>
            <person name="Taunton O.D."/>
            <person name="Gotto A.M. Jr."/>
        </authorList>
    </citation>
    <scope>PROTEIN SEQUENCE OF 27-83</scope>
</reference>
<reference key="15">
    <citation type="journal article" date="1988" name="Biochem. Biophys. Res. Commun.">
        <title>Exact localization of the familial dysbetalipoproteinemia associated HpaI restriction site in the promoter region of the APOC1 gene.</title>
        <authorList>
            <person name="Smit M.V.D."/>
            <person name="Kooij-Meijs E."/>
            <person name="Woudt L.P."/>
            <person name="Havekes L.M."/>
            <person name="Frants R.R."/>
        </authorList>
    </citation>
    <scope>NUCLEOTIDE SEQUENCE [GENOMIC DNA] OF 1-19</scope>
</reference>
<reference key="16">
    <citation type="journal article" date="2007" name="J. Lipid Res.">
        <title>Apolipoprotein C-I binds free fatty acids and reduces their intracellular esterification.</title>
        <authorList>
            <person name="Westerterp M."/>
            <person name="Berbee J.F."/>
            <person name="Delsing D.J."/>
            <person name="Jong M.C."/>
            <person name="Gijbels M.J."/>
            <person name="Dahlmans V.E."/>
            <person name="Offerman E.H."/>
            <person name="Romijn J.A."/>
            <person name="Havekes L.M."/>
            <person name="Rensen P.C."/>
        </authorList>
    </citation>
    <scope>FUNCTION</scope>
</reference>
<reference key="17">
    <citation type="journal article" date="2013" name="Front. Biol.">
        <title>Proteogenomic Review of the Changes in Primate apoC-I during Evolution.</title>
        <authorList>
            <person name="Puppione D."/>
            <person name="Whitelegge J.P."/>
        </authorList>
    </citation>
    <scope>REVIEW</scope>
</reference>
<reference key="18">
    <citation type="journal article" date="2014" name="Comp. Biochem. Physiol.">
        <title>Higher primates, but not New World monkeys, have a duplicate set of enhancers flanking their apoC-I genes.</title>
        <authorList>
            <person name="Puppione D.L."/>
        </authorList>
    </citation>
    <scope>GENE DUPLICATION</scope>
</reference>
<reference key="19">
    <citation type="journal article" date="2014" name="J. Proteomics">
        <title>An enzyme assisted RP-RPLC approach for in-depth analysis of human liver phosphoproteome.</title>
        <authorList>
            <person name="Bian Y."/>
            <person name="Song C."/>
            <person name="Cheng K."/>
            <person name="Dong M."/>
            <person name="Wang F."/>
            <person name="Huang J."/>
            <person name="Sun D."/>
            <person name="Wang L."/>
            <person name="Ye M."/>
            <person name="Zou H."/>
        </authorList>
    </citation>
    <scope>IDENTIFICATION BY MASS SPECTROMETRY [LARGE SCALE ANALYSIS]</scope>
    <source>
        <tissue>Liver</tissue>
    </source>
</reference>
<reference key="20">
    <citation type="journal article" date="2018" name="O. J. Mod. Neurosurg.">
        <title>MALDI-TOF mass spectrometric analysis of brain tumor cyst fluid reveals a protein peak corresponding to ApoC1 and LuzP6.</title>
        <authorList>
            <person name="Groll M."/>
            <person name="Frenzel J."/>
            <person name="Krause M."/>
            <person name="Schaenzer A."/>
            <person name="Mueller W."/>
            <person name="Eschrich K."/>
            <person name="Nestler U."/>
        </authorList>
    </citation>
    <scope>IDENTIFICATION BY MASS SPECTROMETRY</scope>
</reference>
<reference key="21">
    <citation type="journal article" date="1995" name="Biochemistry">
        <title>Conformation of two peptides corresponding to human apolipoprotein C-I residues 7-24 and 35-53 in the presence of sodium dodecyl sulfate by CD and NMR spectroscopy.</title>
        <authorList>
            <person name="Rozek A."/>
            <person name="Buchko G.W."/>
            <person name="Cushley R.J."/>
        </authorList>
    </citation>
    <scope>STRUCTURE BY NMR OF 33-50 AND 61-79</scope>
</reference>
<reference key="22">
    <citation type="journal article" date="1997" name="Protein Sci.">
        <title>Conformational studies of the N-terminal lipid-associating domain of human apolipoprotein C-I by CD and 1H NMR spectroscopy.</title>
        <authorList>
            <person name="Rozek A."/>
            <person name="Buchko G.W."/>
            <person name="Kanda P."/>
            <person name="Cushley R.J."/>
        </authorList>
    </citation>
    <scope>STRUCTURE BY NMR OF 27-64</scope>
</reference>
<reference key="23">
    <citation type="journal article" date="1999" name="Biochemistry">
        <title>Conformation of human apolipoprotein C-I in a lipid-mimetic environment determined by CD and NMR spectroscopy.</title>
        <authorList>
            <person name="Rozek A."/>
            <person name="Sparrow J.T."/>
            <person name="Weisgraber K.H."/>
            <person name="Cushley R.J."/>
        </authorList>
    </citation>
    <scope>STRUCTURE BY NMR OF 27-83</scope>
</reference>
<reference key="24">
    <citation type="journal article" date="1999" name="Nat. Genet.">
        <title>Patterns of single-nucleotide polymorphisms in candidate genes for blood-pressure homeostasis.</title>
        <authorList>
            <person name="Halushka M.K."/>
            <person name="Fan J.-B."/>
            <person name="Bentley K."/>
            <person name="Hsie L."/>
            <person name="Shen N."/>
            <person name="Weder A."/>
            <person name="Cooper R."/>
            <person name="Lipshutz R."/>
            <person name="Chakravarti A."/>
        </authorList>
    </citation>
    <scope>VARIANT MET-16</scope>
</reference>
<reference key="25">
    <citation type="journal article" date="2006" name="FEBS J.">
        <title>A functional polymorphism of apolipoprotein C1 detected by mass spectrometry.</title>
        <authorList>
            <person name="Wroblewski M.S."/>
            <person name="Wilson-Grady J.T."/>
            <person name="Martinez M.B."/>
            <person name="Kasthuri R.S."/>
            <person name="McMillan K.R."/>
            <person name="Flood-Urdangarin C."/>
            <person name="Nelsestuen G.L."/>
        </authorList>
    </citation>
    <scope>VARIANT SER-71</scope>
    <scope>CHARACTERIZATION OF VARIANT SER-71</scope>
</reference>
<proteinExistence type="evidence at protein level"/>
<protein>
    <recommendedName>
        <fullName>Apolipoprotein C-I</fullName>
        <shortName>Apo-CI</shortName>
        <shortName>ApoC-I</shortName>
    </recommendedName>
    <alternativeName>
        <fullName>Apolipoprotein C1</fullName>
    </alternativeName>
    <component>
        <recommendedName>
            <fullName>Truncated apolipoprotein C-I</fullName>
        </recommendedName>
    </component>
</protein>
<organism>
    <name type="scientific">Homo sapiens</name>
    <name type="common">Human</name>
    <dbReference type="NCBI Taxonomy" id="9606"/>
    <lineage>
        <taxon>Eukaryota</taxon>
        <taxon>Metazoa</taxon>
        <taxon>Chordata</taxon>
        <taxon>Craniata</taxon>
        <taxon>Vertebrata</taxon>
        <taxon>Euteleostomi</taxon>
        <taxon>Mammalia</taxon>
        <taxon>Eutheria</taxon>
        <taxon>Euarchontoglires</taxon>
        <taxon>Primates</taxon>
        <taxon>Haplorrhini</taxon>
        <taxon>Catarrhini</taxon>
        <taxon>Hominidae</taxon>
        <taxon>Homo</taxon>
    </lineage>
</organism>